<feature type="chain" id="PRO_0000021624" description="Nucleoid-associated protein Lsr2">
    <location>
        <begin position="1"/>
        <end position="112"/>
    </location>
</feature>
<feature type="DNA-binding region" evidence="1">
    <location>
        <begin position="97"/>
        <end position="102"/>
    </location>
</feature>
<feature type="region of interest" description="Disordered" evidence="2">
    <location>
        <begin position="58"/>
        <end position="78"/>
    </location>
</feature>
<sequence length="112" mass="12165">MAKKVTVTLVDDFDGAGAADETVEFGLDGVTYEIDLTNKNAAKLRGDLRQWVSAGRRVGGRRRGRSNSGRGRGAIDREQSAAIREWARRNGHNVSTRGRIPADVIDAFHAAT</sequence>
<keyword id="KW-0963">Cytoplasm</keyword>
<keyword id="KW-0238">DNA-binding</keyword>
<keyword id="KW-1185">Reference proteome</keyword>
<keyword id="KW-0678">Repressor</keyword>
<keyword id="KW-0804">Transcription</keyword>
<keyword id="KW-0805">Transcription regulation</keyword>
<keyword id="KW-0843">Virulence</keyword>
<gene>
    <name type="primary">lsr2</name>
    <name type="ordered locus">ML0234</name>
</gene>
<protein>
    <recommendedName>
        <fullName evidence="6">Nucleoid-associated protein Lsr2</fullName>
    </recommendedName>
    <alternativeName>
        <fullName>15 kDa antigen</fullName>
    </alternativeName>
    <alternativeName>
        <fullName evidence="5">A15</fullName>
    </alternativeName>
</protein>
<accession>P24094</accession>
<dbReference type="EMBL" id="M67510">
    <property type="protein sequence ID" value="AAA25351.1"/>
    <property type="molecule type" value="Genomic_DNA"/>
</dbReference>
<dbReference type="EMBL" id="AL583917">
    <property type="protein sequence ID" value="CAC29742.1"/>
    <property type="molecule type" value="Genomic_DNA"/>
</dbReference>
<dbReference type="EMBL" id="X53487">
    <property type="protein sequence ID" value="CAA37572.1"/>
    <property type="molecule type" value="Genomic_DNA"/>
</dbReference>
<dbReference type="PIR" id="B43601">
    <property type="entry name" value="B43601"/>
</dbReference>
<dbReference type="RefSeq" id="NP_301294.1">
    <property type="nucleotide sequence ID" value="NC_002677.1"/>
</dbReference>
<dbReference type="RefSeq" id="WP_010907618.1">
    <property type="nucleotide sequence ID" value="NC_002677.1"/>
</dbReference>
<dbReference type="BMRB" id="P24094"/>
<dbReference type="SMR" id="P24094"/>
<dbReference type="STRING" id="272631.gene:17574051"/>
<dbReference type="KEGG" id="mle:ML0234"/>
<dbReference type="PATRIC" id="fig|272631.5.peg.367"/>
<dbReference type="Leproma" id="ML0234"/>
<dbReference type="eggNOG" id="ENOG5032RKK">
    <property type="taxonomic scope" value="Bacteria"/>
</dbReference>
<dbReference type="HOGENOM" id="CLU_139818_0_0_11"/>
<dbReference type="OrthoDB" id="4113332at2"/>
<dbReference type="Proteomes" id="UP000000806">
    <property type="component" value="Chromosome"/>
</dbReference>
<dbReference type="GO" id="GO:0005737">
    <property type="term" value="C:cytoplasm"/>
    <property type="evidence" value="ECO:0007669"/>
    <property type="project" value="UniProtKB-KW"/>
</dbReference>
<dbReference type="GO" id="GO:0009295">
    <property type="term" value="C:nucleoid"/>
    <property type="evidence" value="ECO:0007669"/>
    <property type="project" value="UniProtKB-SubCell"/>
</dbReference>
<dbReference type="GO" id="GO:0016746">
    <property type="term" value="F:acyltransferase activity"/>
    <property type="evidence" value="ECO:0007669"/>
    <property type="project" value="InterPro"/>
</dbReference>
<dbReference type="GO" id="GO:0003677">
    <property type="term" value="F:DNA binding"/>
    <property type="evidence" value="ECO:0007669"/>
    <property type="project" value="UniProtKB-KW"/>
</dbReference>
<dbReference type="FunFam" id="4.10.320.10:FF:000004">
    <property type="entry name" value="Nucleoid-associated protein Lsr2"/>
    <property type="match status" value="1"/>
</dbReference>
<dbReference type="Gene3D" id="4.10.320.10">
    <property type="entry name" value="E3-binding domain"/>
    <property type="match status" value="1"/>
</dbReference>
<dbReference type="Gene3D" id="3.30.60.230">
    <property type="entry name" value="Lsr2, dimerization domain"/>
    <property type="match status" value="1"/>
</dbReference>
<dbReference type="InterPro" id="IPR036625">
    <property type="entry name" value="E3-bd_dom_sf"/>
</dbReference>
<dbReference type="InterPro" id="IPR042261">
    <property type="entry name" value="Lsr2-like_dimerization"/>
</dbReference>
<dbReference type="InterPro" id="IPR024412">
    <property type="entry name" value="Lsr2_dim_dom"/>
</dbReference>
<dbReference type="InterPro" id="IPR055370">
    <property type="entry name" value="Lsr2_DNA-bd"/>
</dbReference>
<dbReference type="Pfam" id="PF11774">
    <property type="entry name" value="Lsr2"/>
    <property type="match status" value="1"/>
</dbReference>
<dbReference type="Pfam" id="PF23359">
    <property type="entry name" value="Lsr2_DNA-bd"/>
    <property type="match status" value="1"/>
</dbReference>
<proteinExistence type="inferred from homology"/>
<comment type="function">
    <text evidence="1 3 4">DNA-bridging protein that has both architectural and regulatory roles. Influences the organization of chromatin and gene expression by binding non-specifically to DNA, with a preference for AT-rich sequences, and bridging distant DNA segments. Represses expression of multiple genes involved in a broad range of cellular processes. May coordinate global gene regulation and virulence as well as genes important for adaptation to changing O(2) levels. Protects against reactive oxygen intermediates (By similarity). Dominant T-cell antigen and stimulates lymphoproliferation. Most probably causes the lymphoproliferative responses occurring in leprosy.</text>
</comment>
<comment type="subunit">
    <text evidence="1">Homodimer.</text>
</comment>
<comment type="subcellular location">
    <subcellularLocation>
        <location evidence="1">Cytoplasm</location>
        <location evidence="1">Nucleoid</location>
    </subcellularLocation>
</comment>
<comment type="domain">
    <text evidence="1">The C-terminal domain binds DNA and the N-terminal domain is involved in dimerization. Both domains are essential for normal function (By similarity).</text>
</comment>
<comment type="similarity">
    <text evidence="7">Belongs to the Lsr2 family.</text>
</comment>
<organism>
    <name type="scientific">Mycobacterium leprae (strain TN)</name>
    <dbReference type="NCBI Taxonomy" id="272631"/>
    <lineage>
        <taxon>Bacteria</taxon>
        <taxon>Bacillati</taxon>
        <taxon>Actinomycetota</taxon>
        <taxon>Actinomycetes</taxon>
        <taxon>Mycobacteriales</taxon>
        <taxon>Mycobacteriaceae</taxon>
        <taxon>Mycobacterium</taxon>
    </lineage>
</organism>
<evidence type="ECO:0000250" key="1">
    <source>
        <dbReference type="UniProtKB" id="P9WIP7"/>
    </source>
</evidence>
<evidence type="ECO:0000256" key="2">
    <source>
        <dbReference type="SAM" id="MobiDB-lite"/>
    </source>
</evidence>
<evidence type="ECO:0000269" key="3">
    <source>
    </source>
</evidence>
<evidence type="ECO:0000269" key="4">
    <source>
    </source>
</evidence>
<evidence type="ECO:0000303" key="5">
    <source>
    </source>
</evidence>
<evidence type="ECO:0000303" key="6">
    <source>
    </source>
</evidence>
<evidence type="ECO:0000305" key="7"/>
<reference key="1">
    <citation type="journal article" date="1991" name="Infect. Immun.">
        <title>Identification of Mycobacterium leprae antigens from a cosmid library: characterization of a 15-kilodalton antigen that is recognized by both the humoral and cellular immune systems in leprosy patients.</title>
        <authorList>
            <person name="Sela S."/>
            <person name="Thole J.E."/>
            <person name="Ottenhoff T.H."/>
            <person name="Clark-Curtiss J.E."/>
        </authorList>
    </citation>
    <scope>NUCLEOTIDE SEQUENCE [GENOMIC DNA]</scope>
    <scope>FUNCTION</scope>
</reference>
<reference key="2">
    <citation type="journal article" date="2001" name="Nature">
        <title>Massive gene decay in the leprosy bacillus.</title>
        <authorList>
            <person name="Cole S.T."/>
            <person name="Eiglmeier K."/>
            <person name="Parkhill J."/>
            <person name="James K.D."/>
            <person name="Thomson N.R."/>
            <person name="Wheeler P.R."/>
            <person name="Honore N."/>
            <person name="Garnier T."/>
            <person name="Churcher C.M."/>
            <person name="Harris D.E."/>
            <person name="Mungall K.L."/>
            <person name="Basham D."/>
            <person name="Brown D."/>
            <person name="Chillingworth T."/>
            <person name="Connor R."/>
            <person name="Davies R.M."/>
            <person name="Devlin K."/>
            <person name="Duthoy S."/>
            <person name="Feltwell T."/>
            <person name="Fraser A."/>
            <person name="Hamlin N."/>
            <person name="Holroyd S."/>
            <person name="Hornsby T."/>
            <person name="Jagels K."/>
            <person name="Lacroix C."/>
            <person name="Maclean J."/>
            <person name="Moule S."/>
            <person name="Murphy L.D."/>
            <person name="Oliver K."/>
            <person name="Quail M.A."/>
            <person name="Rajandream M.A."/>
            <person name="Rutherford K.M."/>
            <person name="Rutter S."/>
            <person name="Seeger K."/>
            <person name="Simon S."/>
            <person name="Simmonds M."/>
            <person name="Skelton J."/>
            <person name="Squares R."/>
            <person name="Squares S."/>
            <person name="Stevens K."/>
            <person name="Taylor K."/>
            <person name="Whitehead S."/>
            <person name="Woodward J.R."/>
            <person name="Barrell B.G."/>
        </authorList>
    </citation>
    <scope>NUCLEOTIDE SEQUENCE [LARGE SCALE GENOMIC DNA]</scope>
    <source>
        <strain>TN</strain>
    </source>
</reference>
<reference key="3">
    <citation type="journal article" date="1991" name="Proc. Natl. Acad. Sci. U.S.A.">
        <title>Recombinant fusion protein identified by lepromatous sera mimics native Mycobacterium leprae in T-cell responses across the leprosy spectrum.</title>
        <authorList>
            <person name="Laal S."/>
            <person name="Sharma Y.D."/>
            <person name="Prasad H.K."/>
            <person name="Murtaza A."/>
            <person name="Singh S."/>
            <person name="Tangri S."/>
            <person name="Misra R.S."/>
            <person name="Nath I."/>
        </authorList>
    </citation>
    <scope>NUCLEOTIDE SEQUENCE [GENOMIC DNA] OF 24-112</scope>
    <scope>FUNCTION</scope>
</reference>
<name>LSR2_MYCLE</name>